<name>DCTD_CAEEL</name>
<proteinExistence type="inferred from homology"/>
<accession>P30648</accession>
<evidence type="ECO:0000250" key="1"/>
<evidence type="ECO:0000255" key="2">
    <source>
        <dbReference type="PROSITE-ProRule" id="PRU01083"/>
    </source>
</evidence>
<evidence type="ECO:0000305" key="3"/>
<protein>
    <recommendedName>
        <fullName>Probable deoxycytidylate deaminase</fullName>
        <ecNumber>3.5.4.12</ecNumber>
    </recommendedName>
    <alternativeName>
        <fullName>dCMP deaminase</fullName>
    </alternativeName>
</protein>
<reference key="1">
    <citation type="journal article" date="1992" name="Nature">
        <title>The C. elegans genome sequencing project: a beginning.</title>
        <authorList>
            <person name="Sulston J."/>
            <person name="Du Z."/>
            <person name="Thomas K."/>
            <person name="Wilson R."/>
            <person name="Hillier L."/>
            <person name="Staden R."/>
            <person name="Halloran N."/>
            <person name="Green P."/>
            <person name="Thierry-Mieg J."/>
            <person name="Qiu L."/>
            <person name="Dear S."/>
            <person name="Coulson A."/>
            <person name="Craxton M."/>
            <person name="Durbin R."/>
            <person name="Berks M."/>
            <person name="Metzstein M."/>
            <person name="Hawkins T."/>
            <person name="Ainscough R."/>
            <person name="Waterston R."/>
        </authorList>
    </citation>
    <scope>NUCLEOTIDE SEQUENCE [LARGE SCALE GENOMIC DNA]</scope>
    <source>
        <strain>Bristol N2</strain>
    </source>
</reference>
<reference key="2">
    <citation type="journal article" date="1998" name="Science">
        <title>Genome sequence of the nematode C. elegans: a platform for investigating biology.</title>
        <authorList>
            <consortium name="The C. elegans sequencing consortium"/>
        </authorList>
    </citation>
    <scope>NUCLEOTIDE SEQUENCE [LARGE SCALE GENOMIC DNA]</scope>
    <source>
        <strain>Bristol N2</strain>
    </source>
</reference>
<gene>
    <name type="ORF">ZK643.2</name>
</gene>
<comment type="function">
    <text evidence="1">Supplies the nucleotide substrate for thymidylate synthetase.</text>
</comment>
<comment type="catalytic activity">
    <reaction>
        <text>dCMP + H2O + H(+) = dUMP + NH4(+)</text>
        <dbReference type="Rhea" id="RHEA:22924"/>
        <dbReference type="ChEBI" id="CHEBI:15377"/>
        <dbReference type="ChEBI" id="CHEBI:15378"/>
        <dbReference type="ChEBI" id="CHEBI:28938"/>
        <dbReference type="ChEBI" id="CHEBI:57566"/>
        <dbReference type="ChEBI" id="CHEBI:246422"/>
        <dbReference type="EC" id="3.5.4.12"/>
    </reaction>
</comment>
<comment type="cofactor">
    <cofactor evidence="1">
        <name>Zn(2+)</name>
        <dbReference type="ChEBI" id="CHEBI:29105"/>
    </cofactor>
</comment>
<comment type="similarity">
    <text evidence="3">Belongs to the cytidine and deoxycytidylate deaminase family.</text>
</comment>
<dbReference type="EC" id="3.5.4.12"/>
<dbReference type="EMBL" id="Z11126">
    <property type="protein sequence ID" value="CAA77473.1"/>
    <property type="molecule type" value="Genomic_DNA"/>
</dbReference>
<dbReference type="PIR" id="S23240">
    <property type="entry name" value="S23240"/>
</dbReference>
<dbReference type="RefSeq" id="NP_498980.1">
    <property type="nucleotide sequence ID" value="NM_066579.6"/>
</dbReference>
<dbReference type="SMR" id="P30648"/>
<dbReference type="FunCoup" id="P30648">
    <property type="interactions" value="1781"/>
</dbReference>
<dbReference type="STRING" id="6239.ZK643.2.1"/>
<dbReference type="ChEMBL" id="CHEMBL2448"/>
<dbReference type="PaxDb" id="6239-ZK643.2"/>
<dbReference type="EnsemblMetazoa" id="ZK643.2.1">
    <property type="protein sequence ID" value="ZK643.2.1"/>
    <property type="gene ID" value="WBGene00014034"/>
</dbReference>
<dbReference type="GeneID" id="191373"/>
<dbReference type="KEGG" id="cel:CELE_ZK643.2"/>
<dbReference type="UCSC" id="ZK643.2">
    <property type="organism name" value="c. elegans"/>
</dbReference>
<dbReference type="AGR" id="WB:WBGene00014034"/>
<dbReference type="CTD" id="191373"/>
<dbReference type="WormBase" id="ZK643.2">
    <property type="protein sequence ID" value="CE00441"/>
    <property type="gene ID" value="WBGene00014034"/>
</dbReference>
<dbReference type="eggNOG" id="KOG3127">
    <property type="taxonomic scope" value="Eukaryota"/>
</dbReference>
<dbReference type="GeneTree" id="ENSGT00940000153676"/>
<dbReference type="HOGENOM" id="CLU_047993_1_1_1"/>
<dbReference type="InParanoid" id="P30648"/>
<dbReference type="OMA" id="CEIWVTH"/>
<dbReference type="OrthoDB" id="6710946at2759"/>
<dbReference type="PhylomeDB" id="P30648"/>
<dbReference type="PRO" id="PR:P30648"/>
<dbReference type="Proteomes" id="UP000001940">
    <property type="component" value="Chromosome III"/>
</dbReference>
<dbReference type="Bgee" id="WBGene00014034">
    <property type="expression patterns" value="Expressed in germ line (C elegans) and 4 other cell types or tissues"/>
</dbReference>
<dbReference type="GO" id="GO:0005737">
    <property type="term" value="C:cytoplasm"/>
    <property type="evidence" value="ECO:0000318"/>
    <property type="project" value="GO_Central"/>
</dbReference>
<dbReference type="GO" id="GO:0004132">
    <property type="term" value="F:dCMP deaminase activity"/>
    <property type="evidence" value="ECO:0000318"/>
    <property type="project" value="GO_Central"/>
</dbReference>
<dbReference type="GO" id="GO:0008270">
    <property type="term" value="F:zinc ion binding"/>
    <property type="evidence" value="ECO:0007669"/>
    <property type="project" value="InterPro"/>
</dbReference>
<dbReference type="GO" id="GO:0009972">
    <property type="term" value="P:cytidine deamination"/>
    <property type="evidence" value="ECO:0000318"/>
    <property type="project" value="GO_Central"/>
</dbReference>
<dbReference type="GO" id="GO:0006231">
    <property type="term" value="P:dTMP biosynthetic process"/>
    <property type="evidence" value="ECO:0000318"/>
    <property type="project" value="GO_Central"/>
</dbReference>
<dbReference type="GO" id="GO:0006226">
    <property type="term" value="P:dUMP biosynthetic process"/>
    <property type="evidence" value="ECO:0000318"/>
    <property type="project" value="GO_Central"/>
</dbReference>
<dbReference type="CDD" id="cd01286">
    <property type="entry name" value="deoxycytidylate_deaminase"/>
    <property type="match status" value="1"/>
</dbReference>
<dbReference type="FunFam" id="3.40.140.10:FF:000021">
    <property type="entry name" value="Deoxycytidylate deaminase"/>
    <property type="match status" value="1"/>
</dbReference>
<dbReference type="Gene3D" id="3.40.140.10">
    <property type="entry name" value="Cytidine Deaminase, domain 2"/>
    <property type="match status" value="1"/>
</dbReference>
<dbReference type="InterPro" id="IPR016192">
    <property type="entry name" value="APOBEC/CMP_deaminase_Zn-bd"/>
</dbReference>
<dbReference type="InterPro" id="IPR002125">
    <property type="entry name" value="CMP_dCMP_dom"/>
</dbReference>
<dbReference type="InterPro" id="IPR016193">
    <property type="entry name" value="Cytidine_deaminase-like"/>
</dbReference>
<dbReference type="InterPro" id="IPR015517">
    <property type="entry name" value="dCMP_deaminase-rel"/>
</dbReference>
<dbReference type="InterPro" id="IPR035105">
    <property type="entry name" value="Deoxycytidylate_deaminase_dom"/>
</dbReference>
<dbReference type="PANTHER" id="PTHR11086:SF18">
    <property type="entry name" value="DEOXYCYTIDYLATE DEAMINASE"/>
    <property type="match status" value="1"/>
</dbReference>
<dbReference type="PANTHER" id="PTHR11086">
    <property type="entry name" value="DEOXYCYTIDYLATE DEAMINASE-RELATED"/>
    <property type="match status" value="1"/>
</dbReference>
<dbReference type="Pfam" id="PF00383">
    <property type="entry name" value="dCMP_cyt_deam_1"/>
    <property type="match status" value="1"/>
</dbReference>
<dbReference type="SUPFAM" id="SSF53927">
    <property type="entry name" value="Cytidine deaminase-like"/>
    <property type="match status" value="1"/>
</dbReference>
<dbReference type="PROSITE" id="PS00903">
    <property type="entry name" value="CYT_DCMP_DEAMINASES_1"/>
    <property type="match status" value="1"/>
</dbReference>
<dbReference type="PROSITE" id="PS51747">
    <property type="entry name" value="CYT_DCMP_DEAMINASES_2"/>
    <property type="match status" value="1"/>
</dbReference>
<keyword id="KW-0378">Hydrolase</keyword>
<keyword id="KW-0479">Metal-binding</keyword>
<keyword id="KW-0545">Nucleotide biosynthesis</keyword>
<keyword id="KW-1185">Reference proteome</keyword>
<keyword id="KW-0862">Zinc</keyword>
<organism>
    <name type="scientific">Caenorhabditis elegans</name>
    <dbReference type="NCBI Taxonomy" id="6239"/>
    <lineage>
        <taxon>Eukaryota</taxon>
        <taxon>Metazoa</taxon>
        <taxon>Ecdysozoa</taxon>
        <taxon>Nematoda</taxon>
        <taxon>Chromadorea</taxon>
        <taxon>Rhabditida</taxon>
        <taxon>Rhabditina</taxon>
        <taxon>Rhabditomorpha</taxon>
        <taxon>Rhabditoidea</taxon>
        <taxon>Rhabditidae</taxon>
        <taxon>Peloderinae</taxon>
        <taxon>Caenorhabditis</taxon>
    </lineage>
</organism>
<feature type="chain" id="PRO_0000171695" description="Probable deoxycytidylate deaminase">
    <location>
        <begin position="1"/>
        <end position="197"/>
    </location>
</feature>
<feature type="domain" description="CMP/dCMP-type deaminase" evidence="2">
    <location>
        <begin position="49"/>
        <end position="183"/>
    </location>
</feature>
<feature type="active site" description="Proton donor" evidence="1">
    <location>
        <position position="119"/>
    </location>
</feature>
<feature type="binding site" evidence="1">
    <location>
        <position position="117"/>
    </location>
    <ligand>
        <name>Zn(2+)</name>
        <dbReference type="ChEBI" id="CHEBI:29105"/>
        <note>catalytic</note>
    </ligand>
</feature>
<feature type="binding site" evidence="1">
    <location>
        <position position="143"/>
    </location>
    <ligand>
        <name>Zn(2+)</name>
        <dbReference type="ChEBI" id="CHEBI:29105"/>
        <note>catalytic</note>
    </ligand>
</feature>
<feature type="binding site" evidence="1">
    <location>
        <position position="146"/>
    </location>
    <ligand>
        <name>Zn(2+)</name>
        <dbReference type="ChEBI" id="CHEBI:29105"/>
        <note>catalytic</note>
    </ligand>
</feature>
<sequence length="197" mass="22528">MVPPITSDEFCETSGCFGDSANLHTTLERLKININSDAKKLVDTNGDLKKHQRFLRIAKVTSLRSKDPNTQVGCVIVDKDNCIVSVGYNGFPIGVDDDVFRWDKEDPEDNKHLYVVHAEMNAIINKRCTTLHDCTVYVTLFPCNKCAQMLIQSRVKKVYFLENRDELAFRASKKMLDHARLPYEQIVMPQEAYVIEL</sequence>